<sequence>MLTCIQPSSSSIGGFGKADDNVRILLMASVRNEFGDTSIFSRLGVTALGQHYVLVTKKKMFGGYTTHMITANMRNRPFISIPFKVSSGAQSIEESRDLISRLTTVLGRPGMFSFDDPPIGSQFPVGKELIQLDEVPVGVHDRQDKYLEKGDEVFCEVNVSGVKFYHSGIYAGDGMCYHFVCDAQESESFADALAVFSGASAHVVYDTWFEFVYALVEVSDVPPKIFRASHPLICRSGEQVVKYAEHLQRELENYDIRRCNCQHFSSECSTGVPFSYDMTSNFKYLACTVLKPTSTVVNAMTRPNRDRSSFASSSTSS</sequence>
<protein>
    <recommendedName>
        <fullName evidence="7">Egg-laying defective protein 26</fullName>
    </recommendedName>
    <alternativeName>
        <fullName evidence="5">Putative acyltransferase egl-26</fullName>
        <ecNumber evidence="5">2.3.1.-</ecNumber>
    </alternativeName>
</protein>
<comment type="function">
    <text evidence="2 3 5">Putative acyltransferase (Probable). Plays a role in the morphogenesis of a vulval toroid cell, vulF, which is located where the vulva and the uterus connect (PubMed:11784109, PubMed:17560977). Not required for specifying vulval cell fate (PubMed:17560977).</text>
</comment>
<comment type="subcellular location">
    <subcellularLocation>
        <location evidence="2 3">Apical cell membrane</location>
        <topology evidence="5">Peripheral membrane protein</topology>
    </subcellularLocation>
</comment>
<comment type="alternative products">
    <event type="alternative splicing"/>
    <isoform>
        <id>P91082-1</id>
        <name evidence="7">a</name>
        <sequence type="displayed"/>
    </isoform>
    <isoform>
        <id>P91082-2</id>
        <name evidence="8">b</name>
        <sequence type="described" ref="VSP_061110"/>
    </isoform>
</comment>
<comment type="tissue specificity">
    <text evidence="2">Highly expressed in the cells of the spermatheca, the mouth, and the lining of the pharynx, the rectum, and the excretory canal (PubMed:11784109). Also expressed in the pharyngeal intestinal junction cell (PubMed:11784109).</text>
</comment>
<comment type="developmental stage">
    <text evidence="2">During the L3 larval stage, transiently expressed in the anchor cell, in rectal epithelial cells D, VL, and VR, in B and in Y, and in several neuronal cells (PubMed:11784109). During the L4 larval stage, expressed near the vulva and the uterus, with expression lining the lumen of the uterus and portions of the vulval lumen including the vulval toroid cells vulB and vulE (PubMed:11784109). During the L4 larval stage, not expressed in the vulval toroid vulF (PubMed:11784109).</text>
</comment>
<name>EGL26_CAEEL</name>
<keyword id="KW-0012">Acyltransferase</keyword>
<keyword id="KW-0025">Alternative splicing</keyword>
<keyword id="KW-1003">Cell membrane</keyword>
<keyword id="KW-0472">Membrane</keyword>
<keyword id="KW-1185">Reference proteome</keyword>
<keyword id="KW-0808">Transferase</keyword>
<accession>P91082</accession>
<accession>A0A0K3AWT5</accession>
<gene>
    <name evidence="4 7" type="primary">egl-26</name>
    <name evidence="7" type="synonym">cog-4</name>
    <name evidence="7" type="synonym">egl-48</name>
    <name evidence="7" type="ORF">C23H3.1</name>
</gene>
<feature type="chain" id="PRO_0000453173" description="Egg-laying defective protein 26">
    <location>
        <begin position="1"/>
        <end position="317"/>
    </location>
</feature>
<feature type="domain" description="LRAT" evidence="1">
    <location>
        <begin position="156"/>
        <end position="277"/>
    </location>
</feature>
<feature type="active site" evidence="1">
    <location>
        <position position="166"/>
    </location>
</feature>
<feature type="active site" evidence="1">
    <location>
        <position position="178"/>
    </location>
</feature>
<feature type="active site" description="Acyl-thioester intermediate" evidence="1">
    <location>
        <position position="261"/>
    </location>
</feature>
<feature type="splice variant" id="VSP_061110" description="In isoform b." evidence="5">
    <location>
        <position position="185"/>
    </location>
</feature>
<feature type="mutagenesis site" description="In ku228 and e1952; vulval morphology defects displaying a connection of gonad defective (Cog) phenotype where there is failure to make a proper connection between the vulval and uterine lumens. This is caused by thick disorganized tissue at the apex of the vulva which blocks the exit to the vulva from the uterus. Abnormal vulF cell morphology and irregular positioning of vulF nuclei at the apex of the vulva. These defects most likely cause an egg-laying defective (Egl) phenotype where progeny hatch in the uterus killing the mother." evidence="2">
    <original>G</original>
    <variation>E</variation>
    <location>
        <position position="150"/>
    </location>
</feature>
<feature type="mutagenesis site" description="Does not rescue the egg-laying defect of the egl-26 ku211 mutant." evidence="3">
    <original>H</original>
    <variation>A</variation>
    <location>
        <position position="166"/>
    </location>
</feature>
<feature type="mutagenesis site" description="In ku211; vulval morphology defects displaying a connection of gonad defective (Cog) phenotype where there is failure to make a proper connection between the vulval and uterine lumens. This is caused by thick disorganized tissue at the apex of the vulva which blocks the exit to the vulva from the uterus. Abnormal vulF cell morphology and irregular positioning of vulF nuclei at the apex of the vulva. These defects most likely cause an egg-laying defective (Egl) phenotype where progeny hatch in the uterus killing the mother. No anchor cell invasion or fusion defects during the L3 and L4 larval stages." evidence="2 3">
    <original>G</original>
    <variation>E</variation>
    <location>
        <position position="168"/>
    </location>
</feature>
<feature type="mutagenesis site" description="Rescues the egg-laying defect of the egl-26 ku211 mutant." evidence="3">
    <original>H</original>
    <variation>A</variation>
    <location>
        <position position="178"/>
    </location>
</feature>
<feature type="mutagenesis site" description="Does not rescue the egg-laying defect of the egl-26 ku211 mutant." evidence="3">
    <original>C</original>
    <variation>A</variation>
    <location>
        <position position="261"/>
    </location>
</feature>
<feature type="mutagenesis site" description="Localizes to the apical cell membrane, but is abundant in the cytoplasm. Rescues the egg-laying defect of the egl-26 ku211 mutant." evidence="3">
    <original>S</original>
    <variation>A</variation>
    <variation>T</variation>
    <location>
        <position position="275"/>
    </location>
</feature>
<feature type="mutagenesis site" description="Localizes to the cytoplasm rather than to the apical cell membrane. Does not rescue the egg-laying defect of the egl-26 ku211 mutant." evidence="3">
    <original>S</original>
    <variation>E</variation>
    <location>
        <position position="275"/>
    </location>
</feature>
<feature type="mutagenesis site" description="In n481; vulval morphology defects displaying a connection of gonad defective (Cog) phenotype where there is failure to make a proper connection between the vulval and uterine lumens. This is caused by thick disorganized tissue at the apex of the vulva which blocks the exit to the vulva from the uterus. Abnormal vulF cell morphology and irregular positioning of vulF nuclei at the apex of the vulva. These defects most likely cause an egg-laying defective (Egl) phenotype where progeny hatch in the uterus killing the mother. Localizes to the cytoplasm rather than to the apical cell membrane. Rescues the egg-laying defect of the egl-26 ku211 mutant." evidence="2 3">
    <original>S</original>
    <variation>F</variation>
    <location>
        <position position="275"/>
    </location>
</feature>
<reference evidence="6" key="1">
    <citation type="journal article" date="1998" name="Science">
        <title>Genome sequence of the nematode C. elegans: a platform for investigating biology.</title>
        <authorList>
            <consortium name="The C. elegans sequencing consortium"/>
        </authorList>
    </citation>
    <scope>NUCLEOTIDE SEQUENCE [LARGE SCALE GENOMIC DNA]</scope>
    <source>
        <strain evidence="6">Bristol N2</strain>
    </source>
</reference>
<reference evidence="5" key="2">
    <citation type="journal article" date="2002" name="Dev. Biol.">
        <title>The Caenorhabditis elegans EGL-26 protein mediates vulval cell morphogenesis.</title>
        <authorList>
            <person name="Hanna-Rose W."/>
            <person name="Han M."/>
        </authorList>
    </citation>
    <scope>FUNCTION</scope>
    <scope>SUBCELLULAR LOCATION</scope>
    <scope>TISSUE SPECIFICITY</scope>
    <scope>DEVELOPMENTAL STAGE</scope>
    <scope>MUTAGENESIS OF GLY-150; GLY-168 AND SER-275</scope>
</reference>
<reference evidence="5" key="3">
    <citation type="journal article" date="2007" name="Dev. Biol.">
        <title>Membrane localization of the NlpC/P60 family protein EGL-26 correlates with regulation of vulval cell morphogenesis in Caenorhabditis elegans.</title>
        <authorList>
            <person name="Estes K.A."/>
            <person name="Kalamegham R."/>
            <person name="Hanna-Rose W."/>
        </authorList>
    </citation>
    <scope>FUNCTION</scope>
    <scope>SUBCELLULAR LOCATION</scope>
    <scope>MUTAGENESIS OF HIS-166; GLY-168; HIS-178; CYS-261 AND SER-275</scope>
</reference>
<organism evidence="6">
    <name type="scientific">Caenorhabditis elegans</name>
    <dbReference type="NCBI Taxonomy" id="6239"/>
    <lineage>
        <taxon>Eukaryota</taxon>
        <taxon>Metazoa</taxon>
        <taxon>Ecdysozoa</taxon>
        <taxon>Nematoda</taxon>
        <taxon>Chromadorea</taxon>
        <taxon>Rhabditida</taxon>
        <taxon>Rhabditina</taxon>
        <taxon>Rhabditomorpha</taxon>
        <taxon>Rhabditoidea</taxon>
        <taxon>Rhabditidae</taxon>
        <taxon>Peloderinae</taxon>
        <taxon>Caenorhabditis</taxon>
    </lineage>
</organism>
<proteinExistence type="evidence at protein level"/>
<dbReference type="EC" id="2.3.1.-" evidence="5"/>
<dbReference type="EMBL" id="BX284602">
    <property type="protein sequence ID" value="CCD65320.1"/>
    <property type="molecule type" value="Genomic_DNA"/>
</dbReference>
<dbReference type="EMBL" id="BX284602">
    <property type="protein sequence ID" value="CTQ86451.1"/>
    <property type="molecule type" value="Genomic_DNA"/>
</dbReference>
<dbReference type="PIR" id="T25560">
    <property type="entry name" value="T25560"/>
</dbReference>
<dbReference type="RefSeq" id="NP_001300512.1">
    <molecule id="P91082-2"/>
    <property type="nucleotide sequence ID" value="NM_001313583.2"/>
</dbReference>
<dbReference type="RefSeq" id="NP_493652.1">
    <molecule id="P91082-1"/>
    <property type="nucleotide sequence ID" value="NM_061251.6"/>
</dbReference>
<dbReference type="FunCoup" id="P91082">
    <property type="interactions" value="356"/>
</dbReference>
<dbReference type="IntAct" id="P91082">
    <property type="interactions" value="2"/>
</dbReference>
<dbReference type="STRING" id="6239.C23H3.1a.1"/>
<dbReference type="PaxDb" id="6239-C23H3.1"/>
<dbReference type="PeptideAtlas" id="P91082"/>
<dbReference type="EnsemblMetazoa" id="C23H3.1a.1">
    <molecule id="P91082-1"/>
    <property type="protein sequence ID" value="C23H3.1a.1"/>
    <property type="gene ID" value="WBGene00001193"/>
</dbReference>
<dbReference type="EnsemblMetazoa" id="C23H3.1b.1">
    <molecule id="P91082-2"/>
    <property type="protein sequence ID" value="C23H3.1b.1"/>
    <property type="gene ID" value="WBGene00001193"/>
</dbReference>
<dbReference type="GeneID" id="173392"/>
<dbReference type="KEGG" id="cel:CELE_C23H3.1"/>
<dbReference type="UCSC" id="C23H3.1">
    <molecule id="P91082-1"/>
    <property type="organism name" value="c. elegans"/>
</dbReference>
<dbReference type="AGR" id="WB:WBGene00001193"/>
<dbReference type="CTD" id="173392"/>
<dbReference type="WormBase" id="C23H3.1a">
    <molecule id="P91082-1"/>
    <property type="protein sequence ID" value="CE08320"/>
    <property type="gene ID" value="WBGene00001193"/>
    <property type="gene designation" value="egl-26"/>
</dbReference>
<dbReference type="WormBase" id="C23H3.1b">
    <molecule id="P91082-2"/>
    <property type="protein sequence ID" value="CE50533"/>
    <property type="gene ID" value="WBGene00001193"/>
    <property type="gene designation" value="egl-26"/>
</dbReference>
<dbReference type="eggNOG" id="ENOG502R7CS">
    <property type="taxonomic scope" value="Eukaryota"/>
</dbReference>
<dbReference type="HOGENOM" id="CLU_877803_0_0_1"/>
<dbReference type="InParanoid" id="P91082"/>
<dbReference type="OMA" id="ASHPLIC"/>
<dbReference type="OrthoDB" id="5776706at2759"/>
<dbReference type="PRO" id="PR:P91082"/>
<dbReference type="Proteomes" id="UP000001940">
    <property type="component" value="Chromosome II"/>
</dbReference>
<dbReference type="Bgee" id="WBGene00001193">
    <property type="expression patterns" value="Expressed in pharyngeal muscle cell (C elegans) and 4 other cell types or tissues"/>
</dbReference>
<dbReference type="ExpressionAtlas" id="P91082">
    <property type="expression patterns" value="baseline and differential"/>
</dbReference>
<dbReference type="GO" id="GO:0016324">
    <property type="term" value="C:apical plasma membrane"/>
    <property type="evidence" value="ECO:0000314"/>
    <property type="project" value="WormBase"/>
</dbReference>
<dbReference type="GO" id="GO:0098592">
    <property type="term" value="C:cytoplasmic side of apical plasma membrane"/>
    <property type="evidence" value="ECO:0000314"/>
    <property type="project" value="UniProtKB"/>
</dbReference>
<dbReference type="GO" id="GO:0016746">
    <property type="term" value="F:acyltransferase activity"/>
    <property type="evidence" value="ECO:0007669"/>
    <property type="project" value="UniProtKB-KW"/>
</dbReference>
<dbReference type="GO" id="GO:0000902">
    <property type="term" value="P:cell morphogenesis"/>
    <property type="evidence" value="ECO:0000315"/>
    <property type="project" value="WormBase"/>
</dbReference>
<dbReference type="GO" id="GO:0018991">
    <property type="term" value="P:egg-laying behavior"/>
    <property type="evidence" value="ECO:0000315"/>
    <property type="project" value="WormBase"/>
</dbReference>
<dbReference type="GO" id="GO:0009792">
    <property type="term" value="P:embryo development ending in birth or egg hatching"/>
    <property type="evidence" value="ECO:0000315"/>
    <property type="project" value="WormBase"/>
</dbReference>
<dbReference type="GO" id="GO:0002119">
    <property type="term" value="P:nematode larval development"/>
    <property type="evidence" value="ECO:0000315"/>
    <property type="project" value="WormBase"/>
</dbReference>
<dbReference type="GO" id="GO:0040026">
    <property type="term" value="P:positive regulation of vulval development"/>
    <property type="evidence" value="ECO:0000315"/>
    <property type="project" value="UniProtKB"/>
</dbReference>
<dbReference type="GO" id="GO:0040025">
    <property type="term" value="P:vulval development"/>
    <property type="evidence" value="ECO:0000315"/>
    <property type="project" value="WormBase"/>
</dbReference>
<dbReference type="FunFam" id="3.90.1720.10:FF:000019">
    <property type="entry name" value="CBN-EGL-26 protein"/>
    <property type="match status" value="1"/>
</dbReference>
<dbReference type="Gene3D" id="3.90.1720.10">
    <property type="entry name" value="endopeptidase domain like (from Nostoc punctiforme)"/>
    <property type="match status" value="1"/>
</dbReference>
<dbReference type="InterPro" id="IPR007053">
    <property type="entry name" value="LRAT_dom"/>
</dbReference>
<dbReference type="InterPro" id="IPR053372">
    <property type="entry name" value="Vulval_toroid_morpho-assoc"/>
</dbReference>
<dbReference type="PANTHER" id="PTHR36948:SF1">
    <property type="entry name" value="EGG-LAYING DEFECTIVE PROTEIN 26"/>
    <property type="match status" value="1"/>
</dbReference>
<dbReference type="PANTHER" id="PTHR36948">
    <property type="entry name" value="PROTEIN CBG04856"/>
    <property type="match status" value="1"/>
</dbReference>
<dbReference type="Pfam" id="PF04970">
    <property type="entry name" value="LRAT"/>
    <property type="match status" value="1"/>
</dbReference>
<dbReference type="PROSITE" id="PS51934">
    <property type="entry name" value="LRAT"/>
    <property type="match status" value="1"/>
</dbReference>
<evidence type="ECO:0000255" key="1">
    <source>
        <dbReference type="PROSITE-ProRule" id="PRU01283"/>
    </source>
</evidence>
<evidence type="ECO:0000269" key="2">
    <source>
    </source>
</evidence>
<evidence type="ECO:0000269" key="3">
    <source>
    </source>
</evidence>
<evidence type="ECO:0000303" key="4">
    <source>
    </source>
</evidence>
<evidence type="ECO:0000305" key="5"/>
<evidence type="ECO:0000312" key="6">
    <source>
        <dbReference type="Proteomes" id="UP000001940"/>
    </source>
</evidence>
<evidence type="ECO:0000312" key="7">
    <source>
        <dbReference type="WormBase" id="C23H3.1a"/>
    </source>
</evidence>
<evidence type="ECO:0000312" key="8">
    <source>
        <dbReference type="WormBase" id="C23H3.1b"/>
    </source>
</evidence>